<organism>
    <name type="scientific">Mus musculus</name>
    <name type="common">Mouse</name>
    <dbReference type="NCBI Taxonomy" id="10090"/>
    <lineage>
        <taxon>Eukaryota</taxon>
        <taxon>Metazoa</taxon>
        <taxon>Chordata</taxon>
        <taxon>Craniata</taxon>
        <taxon>Vertebrata</taxon>
        <taxon>Euteleostomi</taxon>
        <taxon>Mammalia</taxon>
        <taxon>Eutheria</taxon>
        <taxon>Euarchontoglires</taxon>
        <taxon>Glires</taxon>
        <taxon>Rodentia</taxon>
        <taxon>Myomorpha</taxon>
        <taxon>Muroidea</taxon>
        <taxon>Muridae</taxon>
        <taxon>Murinae</taxon>
        <taxon>Mus</taxon>
        <taxon>Mus</taxon>
    </lineage>
</organism>
<sequence>MSQRVRRNGSPTPAGALAGGAVGPPGGPGSRLQPMRATVPFQLKQQQQHGSPTRGGGGGGNNGGNGGASGPSGGGGSGGPRTASRSTSPTRGGGGSAAARTSPTVATQTGASVTSTRGTSPTRGTAPGARSSPPRPQPPPPLLGTVSSPSSSPTHLWPSEVIAAPPSARVRHRRRSPEQGRPSAEKRSPSAPVCKAGDKTHPPSSSSSSIIRRTSSLDTLAAPYLAGHWPRDIRGQAAPCMRDKATQTESAWAEEYEKKKGSHKRSSSWGSTEQLKEIAKLRQQLQRSKHSSRHHRDKERQSPFHGNHAAINQSQAPAPKSTLVPAGPITKSSGSRFRNSVEGLNQEIEIIIKETGEKEEQLIPQDIPDGHRAPPPLAQRSSSTRSIDTQTPGGADKGSNNSSRSQSVSPTSFLTISNEGSEESPCSADDLLADPRDKENGNNSPLPKYATSPKPNNSYMFKREPPEGCERVKVFEECSPKQLHEIPAFYCPDKNKVNFIPKSGSAFCLVSILKPLLPTPDLTLKGSGHSLTVTTGMTTTLLQPISMASLSTNTEQERVSRGTSTVLPSASLHAPPEPIEEAEG</sequence>
<keyword id="KW-0597">Phosphoprotein</keyword>
<keyword id="KW-1185">Reference proteome</keyword>
<proteinExistence type="evidence at protein level"/>
<accession>Q3U3E2</accession>
<accession>Q68EE3</accession>
<dbReference type="EMBL" id="AK154812">
    <property type="protein sequence ID" value="BAE32846.1"/>
    <property type="molecule type" value="mRNA"/>
</dbReference>
<dbReference type="EMBL" id="BC080299">
    <property type="protein sequence ID" value="AAH80299.2"/>
    <property type="molecule type" value="mRNA"/>
</dbReference>
<dbReference type="CCDS" id="CCDS14986.1"/>
<dbReference type="RefSeq" id="NP_001032814.1">
    <property type="nucleotide sequence ID" value="NM_001037725.3"/>
</dbReference>
<dbReference type="SMR" id="Q3U3E2"/>
<dbReference type="BioGRID" id="215548">
    <property type="interactions" value="1"/>
</dbReference>
<dbReference type="FunCoup" id="Q3U3E2">
    <property type="interactions" value="2442"/>
</dbReference>
<dbReference type="STRING" id="10090.ENSMUSP00000041671"/>
<dbReference type="GlyGen" id="Q3U3E2">
    <property type="glycosylation" value="5 sites, 1 N-linked glycan (1 site), 1 O-linked glycan (3 sites)"/>
</dbReference>
<dbReference type="iPTMnet" id="Q3U3E2"/>
<dbReference type="PhosphoSitePlus" id="Q3U3E2"/>
<dbReference type="jPOST" id="Q3U3E2"/>
<dbReference type="PaxDb" id="10090-ENSMUSP00000041671"/>
<dbReference type="PeptideAtlas" id="Q3U3E2"/>
<dbReference type="ProteomicsDB" id="275960"/>
<dbReference type="Pumba" id="Q3U3E2"/>
<dbReference type="Antibodypedia" id="1012">
    <property type="antibodies" value="137 antibodies from 23 providers"/>
</dbReference>
<dbReference type="DNASU" id="72750"/>
<dbReference type="Ensembl" id="ENSMUST00000036540.12">
    <property type="protein sequence ID" value="ENSMUSP00000041671.6"/>
    <property type="gene ID" value="ENSMUSG00000041040.13"/>
</dbReference>
<dbReference type="GeneID" id="72750"/>
<dbReference type="KEGG" id="mmu:72750"/>
<dbReference type="UCSC" id="uc011wlt.2">
    <property type="organism name" value="mouse"/>
</dbReference>
<dbReference type="AGR" id="MGI:1920000"/>
<dbReference type="CTD" id="150864"/>
<dbReference type="MGI" id="MGI:1920000">
    <property type="gene designation" value="Fam117b"/>
</dbReference>
<dbReference type="VEuPathDB" id="HostDB:ENSMUSG00000041040"/>
<dbReference type="eggNOG" id="ENOG502QR2I">
    <property type="taxonomic scope" value="Eukaryota"/>
</dbReference>
<dbReference type="GeneTree" id="ENSGT00950000183046"/>
<dbReference type="HOGENOM" id="CLU_033432_0_0_1"/>
<dbReference type="InParanoid" id="Q3U3E2"/>
<dbReference type="OMA" id="PREIPQF"/>
<dbReference type="OrthoDB" id="10037581at2759"/>
<dbReference type="PhylomeDB" id="Q3U3E2"/>
<dbReference type="TreeFam" id="TF333159"/>
<dbReference type="BioGRID-ORCS" id="72750">
    <property type="hits" value="1 hit in 77 CRISPR screens"/>
</dbReference>
<dbReference type="ChiTaRS" id="Fam117b">
    <property type="organism name" value="mouse"/>
</dbReference>
<dbReference type="PRO" id="PR:Q3U3E2"/>
<dbReference type="Proteomes" id="UP000000589">
    <property type="component" value="Chromosome 1"/>
</dbReference>
<dbReference type="RNAct" id="Q3U3E2">
    <property type="molecule type" value="protein"/>
</dbReference>
<dbReference type="Bgee" id="ENSMUSG00000041040">
    <property type="expression patterns" value="Expressed in animal zygote and 255 other cell types or tissues"/>
</dbReference>
<dbReference type="ExpressionAtlas" id="Q3U3E2">
    <property type="expression patterns" value="baseline and differential"/>
</dbReference>
<dbReference type="InterPro" id="IPR026642">
    <property type="entry name" value="Glcci1/FAM117"/>
</dbReference>
<dbReference type="PANTHER" id="PTHR14972">
    <property type="entry name" value="AGAP011572-PA"/>
    <property type="match status" value="1"/>
</dbReference>
<dbReference type="PANTHER" id="PTHR14972:SF6">
    <property type="entry name" value="PROTEIN FAM117B"/>
    <property type="match status" value="1"/>
</dbReference>
<dbReference type="Pfam" id="PF15388">
    <property type="entry name" value="FAM117"/>
    <property type="match status" value="1"/>
</dbReference>
<gene>
    <name type="primary">Fam117b</name>
    <name type="synonym">Als2cr13</name>
</gene>
<protein>
    <recommendedName>
        <fullName>Protein FAM117B</fullName>
    </recommendedName>
    <alternativeName>
        <fullName>Amyotrophic lateral sclerosis 2 chromosomal region candidate gene 13 protein homolog</fullName>
    </alternativeName>
</protein>
<feature type="chain" id="PRO_0000299534" description="Protein FAM117B">
    <location>
        <begin position="1"/>
        <end position="584"/>
    </location>
</feature>
<feature type="region of interest" description="Disordered" evidence="2">
    <location>
        <begin position="1"/>
        <end position="214"/>
    </location>
</feature>
<feature type="region of interest" description="Disordered" evidence="2">
    <location>
        <begin position="227"/>
        <end position="461"/>
    </location>
</feature>
<feature type="region of interest" description="Disordered" evidence="2">
    <location>
        <begin position="551"/>
        <end position="584"/>
    </location>
</feature>
<feature type="compositionally biased region" description="Gly residues" evidence="2">
    <location>
        <begin position="53"/>
        <end position="79"/>
    </location>
</feature>
<feature type="compositionally biased region" description="Low complexity" evidence="2">
    <location>
        <begin position="80"/>
        <end position="90"/>
    </location>
</feature>
<feature type="compositionally biased region" description="Low complexity" evidence="2">
    <location>
        <begin position="114"/>
        <end position="132"/>
    </location>
</feature>
<feature type="compositionally biased region" description="Pro residues" evidence="2">
    <location>
        <begin position="133"/>
        <end position="142"/>
    </location>
</feature>
<feature type="compositionally biased region" description="Polar residues" evidence="2">
    <location>
        <begin position="145"/>
        <end position="154"/>
    </location>
</feature>
<feature type="compositionally biased region" description="Low complexity" evidence="2">
    <location>
        <begin position="204"/>
        <end position="214"/>
    </location>
</feature>
<feature type="compositionally biased region" description="Basic residues" evidence="2">
    <location>
        <begin position="287"/>
        <end position="297"/>
    </location>
</feature>
<feature type="compositionally biased region" description="Basic and acidic residues" evidence="2">
    <location>
        <begin position="350"/>
        <end position="361"/>
    </location>
</feature>
<feature type="compositionally biased region" description="Polar residues" evidence="2">
    <location>
        <begin position="379"/>
        <end position="392"/>
    </location>
</feature>
<feature type="compositionally biased region" description="Low complexity" evidence="2">
    <location>
        <begin position="399"/>
        <end position="412"/>
    </location>
</feature>
<feature type="modified residue" description="Phosphoserine" evidence="4">
    <location>
        <position position="10"/>
    </location>
</feature>
<feature type="modified residue" description="Phosphoserine" evidence="4">
    <location>
        <position position="102"/>
    </location>
</feature>
<feature type="modified residue" description="Phosphoserine" evidence="1">
    <location>
        <position position="206"/>
    </location>
</feature>
<feature type="modified residue" description="Phosphoserine" evidence="1">
    <location>
        <position position="215"/>
    </location>
</feature>
<feature type="modified residue" description="Phosphoserine" evidence="1">
    <location>
        <position position="216"/>
    </location>
</feature>
<feature type="modified residue" description="Phosphoserine" evidence="1">
    <location>
        <position position="268"/>
    </location>
</feature>
<feature type="modified residue" description="Phosphoserine" evidence="4">
    <location>
        <position position="340"/>
    </location>
</feature>
<feature type="modified residue" description="Phosphoserine" evidence="1">
    <location>
        <position position="386"/>
    </location>
</feature>
<feature type="modified residue" description="Phosphoserine" evidence="3 4">
    <location>
        <position position="444"/>
    </location>
</feature>
<feature type="modified residue" description="Phosphoserine" evidence="1">
    <location>
        <position position="452"/>
    </location>
</feature>
<evidence type="ECO:0000250" key="1">
    <source>
        <dbReference type="UniProtKB" id="Q6P1L5"/>
    </source>
</evidence>
<evidence type="ECO:0000256" key="2">
    <source>
        <dbReference type="SAM" id="MobiDB-lite"/>
    </source>
</evidence>
<evidence type="ECO:0007744" key="3">
    <source>
    </source>
</evidence>
<evidence type="ECO:0007744" key="4">
    <source>
    </source>
</evidence>
<name>F117B_MOUSE</name>
<reference key="1">
    <citation type="journal article" date="2005" name="Science">
        <title>The transcriptional landscape of the mammalian genome.</title>
        <authorList>
            <person name="Carninci P."/>
            <person name="Kasukawa T."/>
            <person name="Katayama S."/>
            <person name="Gough J."/>
            <person name="Frith M.C."/>
            <person name="Maeda N."/>
            <person name="Oyama R."/>
            <person name="Ravasi T."/>
            <person name="Lenhard B."/>
            <person name="Wells C."/>
            <person name="Kodzius R."/>
            <person name="Shimokawa K."/>
            <person name="Bajic V.B."/>
            <person name="Brenner S.E."/>
            <person name="Batalov S."/>
            <person name="Forrest A.R."/>
            <person name="Zavolan M."/>
            <person name="Davis M.J."/>
            <person name="Wilming L.G."/>
            <person name="Aidinis V."/>
            <person name="Allen J.E."/>
            <person name="Ambesi-Impiombato A."/>
            <person name="Apweiler R."/>
            <person name="Aturaliya R.N."/>
            <person name="Bailey T.L."/>
            <person name="Bansal M."/>
            <person name="Baxter L."/>
            <person name="Beisel K.W."/>
            <person name="Bersano T."/>
            <person name="Bono H."/>
            <person name="Chalk A.M."/>
            <person name="Chiu K.P."/>
            <person name="Choudhary V."/>
            <person name="Christoffels A."/>
            <person name="Clutterbuck D.R."/>
            <person name="Crowe M.L."/>
            <person name="Dalla E."/>
            <person name="Dalrymple B.P."/>
            <person name="de Bono B."/>
            <person name="Della Gatta G."/>
            <person name="di Bernardo D."/>
            <person name="Down T."/>
            <person name="Engstrom P."/>
            <person name="Fagiolini M."/>
            <person name="Faulkner G."/>
            <person name="Fletcher C.F."/>
            <person name="Fukushima T."/>
            <person name="Furuno M."/>
            <person name="Futaki S."/>
            <person name="Gariboldi M."/>
            <person name="Georgii-Hemming P."/>
            <person name="Gingeras T.R."/>
            <person name="Gojobori T."/>
            <person name="Green R.E."/>
            <person name="Gustincich S."/>
            <person name="Harbers M."/>
            <person name="Hayashi Y."/>
            <person name="Hensch T.K."/>
            <person name="Hirokawa N."/>
            <person name="Hill D."/>
            <person name="Huminiecki L."/>
            <person name="Iacono M."/>
            <person name="Ikeo K."/>
            <person name="Iwama A."/>
            <person name="Ishikawa T."/>
            <person name="Jakt M."/>
            <person name="Kanapin A."/>
            <person name="Katoh M."/>
            <person name="Kawasawa Y."/>
            <person name="Kelso J."/>
            <person name="Kitamura H."/>
            <person name="Kitano H."/>
            <person name="Kollias G."/>
            <person name="Krishnan S.P."/>
            <person name="Kruger A."/>
            <person name="Kummerfeld S.K."/>
            <person name="Kurochkin I.V."/>
            <person name="Lareau L.F."/>
            <person name="Lazarevic D."/>
            <person name="Lipovich L."/>
            <person name="Liu J."/>
            <person name="Liuni S."/>
            <person name="McWilliam S."/>
            <person name="Madan Babu M."/>
            <person name="Madera M."/>
            <person name="Marchionni L."/>
            <person name="Matsuda H."/>
            <person name="Matsuzawa S."/>
            <person name="Miki H."/>
            <person name="Mignone F."/>
            <person name="Miyake S."/>
            <person name="Morris K."/>
            <person name="Mottagui-Tabar S."/>
            <person name="Mulder N."/>
            <person name="Nakano N."/>
            <person name="Nakauchi H."/>
            <person name="Ng P."/>
            <person name="Nilsson R."/>
            <person name="Nishiguchi S."/>
            <person name="Nishikawa S."/>
            <person name="Nori F."/>
            <person name="Ohara O."/>
            <person name="Okazaki Y."/>
            <person name="Orlando V."/>
            <person name="Pang K.C."/>
            <person name="Pavan W.J."/>
            <person name="Pavesi G."/>
            <person name="Pesole G."/>
            <person name="Petrovsky N."/>
            <person name="Piazza S."/>
            <person name="Reed J."/>
            <person name="Reid J.F."/>
            <person name="Ring B.Z."/>
            <person name="Ringwald M."/>
            <person name="Rost B."/>
            <person name="Ruan Y."/>
            <person name="Salzberg S.L."/>
            <person name="Sandelin A."/>
            <person name="Schneider C."/>
            <person name="Schoenbach C."/>
            <person name="Sekiguchi K."/>
            <person name="Semple C.A."/>
            <person name="Seno S."/>
            <person name="Sessa L."/>
            <person name="Sheng Y."/>
            <person name="Shibata Y."/>
            <person name="Shimada H."/>
            <person name="Shimada K."/>
            <person name="Silva D."/>
            <person name="Sinclair B."/>
            <person name="Sperling S."/>
            <person name="Stupka E."/>
            <person name="Sugiura K."/>
            <person name="Sultana R."/>
            <person name="Takenaka Y."/>
            <person name="Taki K."/>
            <person name="Tammoja K."/>
            <person name="Tan S.L."/>
            <person name="Tang S."/>
            <person name="Taylor M.S."/>
            <person name="Tegner J."/>
            <person name="Teichmann S.A."/>
            <person name="Ueda H.R."/>
            <person name="van Nimwegen E."/>
            <person name="Verardo R."/>
            <person name="Wei C.L."/>
            <person name="Yagi K."/>
            <person name="Yamanishi H."/>
            <person name="Zabarovsky E."/>
            <person name="Zhu S."/>
            <person name="Zimmer A."/>
            <person name="Hide W."/>
            <person name="Bult C."/>
            <person name="Grimmond S.M."/>
            <person name="Teasdale R.D."/>
            <person name="Liu E.T."/>
            <person name="Brusic V."/>
            <person name="Quackenbush J."/>
            <person name="Wahlestedt C."/>
            <person name="Mattick J.S."/>
            <person name="Hume D.A."/>
            <person name="Kai C."/>
            <person name="Sasaki D."/>
            <person name="Tomaru Y."/>
            <person name="Fukuda S."/>
            <person name="Kanamori-Katayama M."/>
            <person name="Suzuki M."/>
            <person name="Aoki J."/>
            <person name="Arakawa T."/>
            <person name="Iida J."/>
            <person name="Imamura K."/>
            <person name="Itoh M."/>
            <person name="Kato T."/>
            <person name="Kawaji H."/>
            <person name="Kawagashira N."/>
            <person name="Kawashima T."/>
            <person name="Kojima M."/>
            <person name="Kondo S."/>
            <person name="Konno H."/>
            <person name="Nakano K."/>
            <person name="Ninomiya N."/>
            <person name="Nishio T."/>
            <person name="Okada M."/>
            <person name="Plessy C."/>
            <person name="Shibata K."/>
            <person name="Shiraki T."/>
            <person name="Suzuki S."/>
            <person name="Tagami M."/>
            <person name="Waki K."/>
            <person name="Watahiki A."/>
            <person name="Okamura-Oho Y."/>
            <person name="Suzuki H."/>
            <person name="Kawai J."/>
            <person name="Hayashizaki Y."/>
        </authorList>
    </citation>
    <scope>NUCLEOTIDE SEQUENCE [LARGE SCALE MRNA]</scope>
    <source>
        <strain>NOD</strain>
    </source>
</reference>
<reference key="2">
    <citation type="journal article" date="2004" name="Genome Res.">
        <title>The status, quality, and expansion of the NIH full-length cDNA project: the Mammalian Gene Collection (MGC).</title>
        <authorList>
            <consortium name="The MGC Project Team"/>
        </authorList>
    </citation>
    <scope>NUCLEOTIDE SEQUENCE [LARGE SCALE MRNA] OF 150-584</scope>
    <source>
        <strain>C57BL/6J</strain>
        <tissue>Brain</tissue>
    </source>
</reference>
<reference key="3">
    <citation type="journal article" date="2009" name="Immunity">
        <title>The phagosomal proteome in interferon-gamma-activated macrophages.</title>
        <authorList>
            <person name="Trost M."/>
            <person name="English L."/>
            <person name="Lemieux S."/>
            <person name="Courcelles M."/>
            <person name="Desjardins M."/>
            <person name="Thibault P."/>
        </authorList>
    </citation>
    <scope>PHOSPHORYLATION [LARGE SCALE ANALYSIS] AT SER-444</scope>
    <scope>IDENTIFICATION BY MASS SPECTROMETRY [LARGE SCALE ANALYSIS]</scope>
</reference>
<reference key="4">
    <citation type="journal article" date="2010" name="Cell">
        <title>A tissue-specific atlas of mouse protein phosphorylation and expression.</title>
        <authorList>
            <person name="Huttlin E.L."/>
            <person name="Jedrychowski M.P."/>
            <person name="Elias J.E."/>
            <person name="Goswami T."/>
            <person name="Rad R."/>
            <person name="Beausoleil S.A."/>
            <person name="Villen J."/>
            <person name="Haas W."/>
            <person name="Sowa M.E."/>
            <person name="Gygi S.P."/>
        </authorList>
    </citation>
    <scope>PHOSPHORYLATION [LARGE SCALE ANALYSIS] AT SER-10; SER-102; SER-340 AND SER-444</scope>
    <scope>IDENTIFICATION BY MASS SPECTROMETRY [LARGE SCALE ANALYSIS]</scope>
    <source>
        <tissue>Brain</tissue>
        <tissue>Brown adipose tissue</tissue>
        <tissue>Kidney</tissue>
        <tissue>Lung</tissue>
        <tissue>Spleen</tissue>
        <tissue>Testis</tissue>
    </source>
</reference>